<protein>
    <recommendedName>
        <fullName evidence="1">Dihydroxy-acid dehydratase</fullName>
        <shortName evidence="1">DAD</shortName>
        <ecNumber evidence="1">4.2.1.9</ecNumber>
    </recommendedName>
</protein>
<organism>
    <name type="scientific">Staphylococcus aureus (strain bovine RF122 / ET3-1)</name>
    <dbReference type="NCBI Taxonomy" id="273036"/>
    <lineage>
        <taxon>Bacteria</taxon>
        <taxon>Bacillati</taxon>
        <taxon>Bacillota</taxon>
        <taxon>Bacilli</taxon>
        <taxon>Bacillales</taxon>
        <taxon>Staphylococcaceae</taxon>
        <taxon>Staphylococcus</taxon>
    </lineage>
</organism>
<sequence length="562" mass="60021">MRSDMIKKGDHQAPARSLLHATGALKSPTDMNKPFVAICNSYIDIVPGHVHLRELADIAKEAIREAGAIPFEFNTIGVDDGIAMGHIGMRYSLPSREIIADAAETVINAHWFDGVFYIPNCDKITPGMILAAMRTNVPAIFCSGGPMKAGLSAHGKALTLSSMFEAVGAFKKGSISKEEFLDMEQNACPTCGSCAGMFTANSMNCLMEVLGLALPYNGTALAVSDQRREMIRQAAFKLVENIKNDLKPRDIVTREAIDDAFALDMAMGGSTNTVLHTLAIANEAGIDYDLERINAIAKRTPYLSKIAPSSSYSMHDVHEAGGVPAIINELMKKDGTLHPDRITVTGKTLRENNEGKEIKNFDVIHPLDAPYDAQGGLSILFGNIAPKGAVIKVGGVDPSIKTFTGKAICFNSHDEAVEAIDNRTVRAGHVVVIRYEGPKGGPGMPEMLAPTSSIVGRGLGKDVALITDGRFSGATRGIAVGHISPEAASGGPIALIEDGDEITIDLTNRTLNVNQPEDVLARRRESLTPFKAKVKTGYLARYTALVTSANTGGVMQVPENLI</sequence>
<proteinExistence type="inferred from homology"/>
<name>ILVD_STAAB</name>
<evidence type="ECO:0000255" key="1">
    <source>
        <dbReference type="HAMAP-Rule" id="MF_00012"/>
    </source>
</evidence>
<comment type="function">
    <text evidence="1">Functions in the biosynthesis of branched-chain amino acids. Catalyzes the dehydration of (2R,3R)-2,3-dihydroxy-3-methylpentanoate (2,3-dihydroxy-3-methylvalerate) into 2-oxo-3-methylpentanoate (2-oxo-3-methylvalerate) and of (2R)-2,3-dihydroxy-3-methylbutanoate (2,3-dihydroxyisovalerate) into 2-oxo-3-methylbutanoate (2-oxoisovalerate), the penultimate precursor to L-isoleucine and L-valine, respectively.</text>
</comment>
<comment type="catalytic activity">
    <reaction evidence="1">
        <text>(2R)-2,3-dihydroxy-3-methylbutanoate = 3-methyl-2-oxobutanoate + H2O</text>
        <dbReference type="Rhea" id="RHEA:24809"/>
        <dbReference type="ChEBI" id="CHEBI:11851"/>
        <dbReference type="ChEBI" id="CHEBI:15377"/>
        <dbReference type="ChEBI" id="CHEBI:49072"/>
        <dbReference type="EC" id="4.2.1.9"/>
    </reaction>
    <physiologicalReaction direction="left-to-right" evidence="1">
        <dbReference type="Rhea" id="RHEA:24810"/>
    </physiologicalReaction>
</comment>
<comment type="catalytic activity">
    <reaction evidence="1">
        <text>(2R,3R)-2,3-dihydroxy-3-methylpentanoate = (S)-3-methyl-2-oxopentanoate + H2O</text>
        <dbReference type="Rhea" id="RHEA:27694"/>
        <dbReference type="ChEBI" id="CHEBI:15377"/>
        <dbReference type="ChEBI" id="CHEBI:35146"/>
        <dbReference type="ChEBI" id="CHEBI:49258"/>
        <dbReference type="EC" id="4.2.1.9"/>
    </reaction>
    <physiologicalReaction direction="left-to-right" evidence="1">
        <dbReference type="Rhea" id="RHEA:27695"/>
    </physiologicalReaction>
</comment>
<comment type="cofactor">
    <cofactor evidence="1">
        <name>[2Fe-2S] cluster</name>
        <dbReference type="ChEBI" id="CHEBI:190135"/>
    </cofactor>
    <text evidence="1">Binds 1 [2Fe-2S] cluster per subunit. This cluster acts as a Lewis acid cofactor.</text>
</comment>
<comment type="cofactor">
    <cofactor evidence="1">
        <name>Mg(2+)</name>
        <dbReference type="ChEBI" id="CHEBI:18420"/>
    </cofactor>
</comment>
<comment type="pathway">
    <text evidence="1">Amino-acid biosynthesis; L-isoleucine biosynthesis; L-isoleucine from 2-oxobutanoate: step 3/4.</text>
</comment>
<comment type="pathway">
    <text evidence="1">Amino-acid biosynthesis; L-valine biosynthesis; L-valine from pyruvate: step 3/4.</text>
</comment>
<comment type="subunit">
    <text evidence="1">Homodimer.</text>
</comment>
<comment type="similarity">
    <text evidence="1">Belongs to the IlvD/Edd family.</text>
</comment>
<reference key="1">
    <citation type="journal article" date="2007" name="PLoS ONE">
        <title>Molecular correlates of host specialization in Staphylococcus aureus.</title>
        <authorList>
            <person name="Herron-Olson L."/>
            <person name="Fitzgerald J.R."/>
            <person name="Musser J.M."/>
            <person name="Kapur V."/>
        </authorList>
    </citation>
    <scope>NUCLEOTIDE SEQUENCE [LARGE SCALE GENOMIC DNA]</scope>
    <source>
        <strain>bovine RF122 / ET3-1</strain>
    </source>
</reference>
<feature type="chain" id="PRO_1000001068" description="Dihydroxy-acid dehydratase">
    <location>
        <begin position="1"/>
        <end position="562"/>
    </location>
</feature>
<feature type="active site" description="Proton acceptor" evidence="1">
    <location>
        <position position="472"/>
    </location>
</feature>
<feature type="binding site" evidence="1">
    <location>
        <position position="80"/>
    </location>
    <ligand>
        <name>Mg(2+)</name>
        <dbReference type="ChEBI" id="CHEBI:18420"/>
    </ligand>
</feature>
<feature type="binding site" evidence="1">
    <location>
        <position position="121"/>
    </location>
    <ligand>
        <name>[2Fe-2S] cluster</name>
        <dbReference type="ChEBI" id="CHEBI:190135"/>
    </ligand>
</feature>
<feature type="binding site" evidence="1">
    <location>
        <position position="122"/>
    </location>
    <ligand>
        <name>Mg(2+)</name>
        <dbReference type="ChEBI" id="CHEBI:18420"/>
    </ligand>
</feature>
<feature type="binding site" description="via carbamate group" evidence="1">
    <location>
        <position position="123"/>
    </location>
    <ligand>
        <name>Mg(2+)</name>
        <dbReference type="ChEBI" id="CHEBI:18420"/>
    </ligand>
</feature>
<feature type="binding site" evidence="1">
    <location>
        <position position="194"/>
    </location>
    <ligand>
        <name>[2Fe-2S] cluster</name>
        <dbReference type="ChEBI" id="CHEBI:190135"/>
    </ligand>
</feature>
<feature type="binding site" evidence="1">
    <location>
        <position position="446"/>
    </location>
    <ligand>
        <name>Mg(2+)</name>
        <dbReference type="ChEBI" id="CHEBI:18420"/>
    </ligand>
</feature>
<feature type="modified residue" description="N6-carboxylysine" evidence="1">
    <location>
        <position position="123"/>
    </location>
</feature>
<keyword id="KW-0001">2Fe-2S</keyword>
<keyword id="KW-0028">Amino-acid biosynthesis</keyword>
<keyword id="KW-0100">Branched-chain amino acid biosynthesis</keyword>
<keyword id="KW-0408">Iron</keyword>
<keyword id="KW-0411">Iron-sulfur</keyword>
<keyword id="KW-0456">Lyase</keyword>
<keyword id="KW-0460">Magnesium</keyword>
<keyword id="KW-0479">Metal-binding</keyword>
<gene>
    <name evidence="1" type="primary">ilvD</name>
    <name type="ordered locus">SAB1938</name>
</gene>
<accession>Q2YUF6</accession>
<dbReference type="EC" id="4.2.1.9" evidence="1"/>
<dbReference type="EMBL" id="AJ938182">
    <property type="protein sequence ID" value="CAI81627.1"/>
    <property type="molecule type" value="Genomic_DNA"/>
</dbReference>
<dbReference type="RefSeq" id="WP_001255792.1">
    <property type="nucleotide sequence ID" value="NC_007622.1"/>
</dbReference>
<dbReference type="SMR" id="Q2YUF6"/>
<dbReference type="KEGG" id="sab:SAB1938"/>
<dbReference type="HOGENOM" id="CLU_014271_4_2_9"/>
<dbReference type="UniPathway" id="UPA00047">
    <property type="reaction ID" value="UER00057"/>
</dbReference>
<dbReference type="UniPathway" id="UPA00049">
    <property type="reaction ID" value="UER00061"/>
</dbReference>
<dbReference type="GO" id="GO:0005829">
    <property type="term" value="C:cytosol"/>
    <property type="evidence" value="ECO:0007669"/>
    <property type="project" value="TreeGrafter"/>
</dbReference>
<dbReference type="GO" id="GO:0051537">
    <property type="term" value="F:2 iron, 2 sulfur cluster binding"/>
    <property type="evidence" value="ECO:0007669"/>
    <property type="project" value="UniProtKB-UniRule"/>
</dbReference>
<dbReference type="GO" id="GO:0004160">
    <property type="term" value="F:dihydroxy-acid dehydratase activity"/>
    <property type="evidence" value="ECO:0007669"/>
    <property type="project" value="UniProtKB-UniRule"/>
</dbReference>
<dbReference type="GO" id="GO:0000287">
    <property type="term" value="F:magnesium ion binding"/>
    <property type="evidence" value="ECO:0007669"/>
    <property type="project" value="UniProtKB-UniRule"/>
</dbReference>
<dbReference type="GO" id="GO:0009097">
    <property type="term" value="P:isoleucine biosynthetic process"/>
    <property type="evidence" value="ECO:0007669"/>
    <property type="project" value="UniProtKB-UniRule"/>
</dbReference>
<dbReference type="GO" id="GO:0009099">
    <property type="term" value="P:L-valine biosynthetic process"/>
    <property type="evidence" value="ECO:0007669"/>
    <property type="project" value="UniProtKB-UniRule"/>
</dbReference>
<dbReference type="FunFam" id="3.50.30.80:FF:000001">
    <property type="entry name" value="Dihydroxy-acid dehydratase"/>
    <property type="match status" value="1"/>
</dbReference>
<dbReference type="Gene3D" id="3.50.30.80">
    <property type="entry name" value="IlvD/EDD C-terminal domain-like"/>
    <property type="match status" value="1"/>
</dbReference>
<dbReference type="HAMAP" id="MF_00012">
    <property type="entry name" value="IlvD"/>
    <property type="match status" value="1"/>
</dbReference>
<dbReference type="InterPro" id="IPR042096">
    <property type="entry name" value="Dihydro-acid_dehy_C"/>
</dbReference>
<dbReference type="InterPro" id="IPR004404">
    <property type="entry name" value="DihydroxyA_deHydtase"/>
</dbReference>
<dbReference type="InterPro" id="IPR020558">
    <property type="entry name" value="DiOHA_6PGluconate_deHydtase_CS"/>
</dbReference>
<dbReference type="InterPro" id="IPR056740">
    <property type="entry name" value="ILV_EDD_C"/>
</dbReference>
<dbReference type="InterPro" id="IPR000581">
    <property type="entry name" value="ILV_EDD_N"/>
</dbReference>
<dbReference type="InterPro" id="IPR037237">
    <property type="entry name" value="IlvD/EDD_N"/>
</dbReference>
<dbReference type="NCBIfam" id="TIGR00110">
    <property type="entry name" value="ilvD"/>
    <property type="match status" value="1"/>
</dbReference>
<dbReference type="NCBIfam" id="NF002068">
    <property type="entry name" value="PRK00911.1"/>
    <property type="match status" value="1"/>
</dbReference>
<dbReference type="PANTHER" id="PTHR43661">
    <property type="entry name" value="D-XYLONATE DEHYDRATASE"/>
    <property type="match status" value="1"/>
</dbReference>
<dbReference type="PANTHER" id="PTHR43661:SF3">
    <property type="entry name" value="D-XYLONATE DEHYDRATASE YAGF-RELATED"/>
    <property type="match status" value="1"/>
</dbReference>
<dbReference type="Pfam" id="PF24877">
    <property type="entry name" value="ILV_EDD_C"/>
    <property type="match status" value="1"/>
</dbReference>
<dbReference type="Pfam" id="PF00920">
    <property type="entry name" value="ILVD_EDD_N"/>
    <property type="match status" value="1"/>
</dbReference>
<dbReference type="SUPFAM" id="SSF143975">
    <property type="entry name" value="IlvD/EDD N-terminal domain-like"/>
    <property type="match status" value="1"/>
</dbReference>
<dbReference type="SUPFAM" id="SSF52016">
    <property type="entry name" value="LeuD/IlvD-like"/>
    <property type="match status" value="1"/>
</dbReference>
<dbReference type="PROSITE" id="PS00886">
    <property type="entry name" value="ILVD_EDD_1"/>
    <property type="match status" value="1"/>
</dbReference>
<dbReference type="PROSITE" id="PS00887">
    <property type="entry name" value="ILVD_EDD_2"/>
    <property type="match status" value="1"/>
</dbReference>